<comment type="function">
    <text evidence="1">Responsible for the release of ribosomes from messenger RNA at the termination of protein biosynthesis. May increase the efficiency of translation by recycling ribosomes from one round of translation to another.</text>
</comment>
<comment type="subcellular location">
    <subcellularLocation>
        <location evidence="1">Cytoplasm</location>
    </subcellularLocation>
</comment>
<comment type="similarity">
    <text evidence="1">Belongs to the RRF family.</text>
</comment>
<proteinExistence type="inferred from homology"/>
<accession>P0DF39</accession>
<accession>P68904</accession>
<accession>P82556</accession>
<gene>
    <name evidence="1" type="primary">frr</name>
    <name type="synonym">rrf</name>
    <name type="ordered locus">SPs1530</name>
</gene>
<name>RRF_STRPQ</name>
<organism>
    <name type="scientific">Streptococcus pyogenes serotype M3 (strain SSI-1)</name>
    <dbReference type="NCBI Taxonomy" id="193567"/>
    <lineage>
        <taxon>Bacteria</taxon>
        <taxon>Bacillati</taxon>
        <taxon>Bacillota</taxon>
        <taxon>Bacilli</taxon>
        <taxon>Lactobacillales</taxon>
        <taxon>Streptococcaceae</taxon>
        <taxon>Streptococcus</taxon>
    </lineage>
</organism>
<sequence length="185" mass="20572">MANAIIETAKERFAQSHQSLSREYASIRAGRANASLLDRIQVDYYGAPTPLNQLASITVPEARVLLISPFDKSSIKDIERALNASDLGITPANDGSVIRLVIPALTEETRKELAKEVKKVGENAKIAIRNIRRDAMDDAKKQEKAKEITEDELKTLEKDIQKATDDAIKEIDRMTAEKEKELLSV</sequence>
<protein>
    <recommendedName>
        <fullName evidence="1">Ribosome-recycling factor</fullName>
        <shortName evidence="1">RRF</shortName>
    </recommendedName>
    <alternativeName>
        <fullName evidence="1">Ribosome-releasing factor</fullName>
    </alternativeName>
</protein>
<evidence type="ECO:0000255" key="1">
    <source>
        <dbReference type="HAMAP-Rule" id="MF_00040"/>
    </source>
</evidence>
<feature type="chain" id="PRO_0000411559" description="Ribosome-recycling factor">
    <location>
        <begin position="1"/>
        <end position="185"/>
    </location>
</feature>
<keyword id="KW-0963">Cytoplasm</keyword>
<keyword id="KW-0648">Protein biosynthesis</keyword>
<reference key="1">
    <citation type="journal article" date="2003" name="Genome Res.">
        <title>Genome sequence of an M3 strain of Streptococcus pyogenes reveals a large-scale genomic rearrangement in invasive strains and new insights into phage evolution.</title>
        <authorList>
            <person name="Nakagawa I."/>
            <person name="Kurokawa K."/>
            <person name="Yamashita A."/>
            <person name="Nakata M."/>
            <person name="Tomiyasu Y."/>
            <person name="Okahashi N."/>
            <person name="Kawabata S."/>
            <person name="Yamazaki K."/>
            <person name="Shiba T."/>
            <person name="Yasunaga T."/>
            <person name="Hayashi H."/>
            <person name="Hattori M."/>
            <person name="Hamada S."/>
        </authorList>
    </citation>
    <scope>NUCLEOTIDE SEQUENCE [LARGE SCALE GENOMIC DNA]</scope>
    <source>
        <strain>SSI-1</strain>
    </source>
</reference>
<dbReference type="EMBL" id="BA000034">
    <property type="protein sequence ID" value="BAC64625.1"/>
    <property type="molecule type" value="Genomic_DNA"/>
</dbReference>
<dbReference type="RefSeq" id="WP_002985763.1">
    <property type="nucleotide sequence ID" value="NC_004606.1"/>
</dbReference>
<dbReference type="SMR" id="P0DF39"/>
<dbReference type="GeneID" id="69901299"/>
<dbReference type="KEGG" id="sps:SPs1530"/>
<dbReference type="HOGENOM" id="CLU_073981_2_0_9"/>
<dbReference type="GO" id="GO:0005737">
    <property type="term" value="C:cytoplasm"/>
    <property type="evidence" value="ECO:0007669"/>
    <property type="project" value="UniProtKB-SubCell"/>
</dbReference>
<dbReference type="GO" id="GO:0043023">
    <property type="term" value="F:ribosomal large subunit binding"/>
    <property type="evidence" value="ECO:0007669"/>
    <property type="project" value="TreeGrafter"/>
</dbReference>
<dbReference type="GO" id="GO:0006415">
    <property type="term" value="P:translational termination"/>
    <property type="evidence" value="ECO:0007669"/>
    <property type="project" value="UniProtKB-UniRule"/>
</dbReference>
<dbReference type="CDD" id="cd00520">
    <property type="entry name" value="RRF"/>
    <property type="match status" value="1"/>
</dbReference>
<dbReference type="FunFam" id="1.10.132.20:FF:000001">
    <property type="entry name" value="Ribosome-recycling factor"/>
    <property type="match status" value="1"/>
</dbReference>
<dbReference type="FunFam" id="3.30.1360.40:FF:000001">
    <property type="entry name" value="Ribosome-recycling factor"/>
    <property type="match status" value="1"/>
</dbReference>
<dbReference type="Gene3D" id="3.30.1360.40">
    <property type="match status" value="1"/>
</dbReference>
<dbReference type="Gene3D" id="1.10.132.20">
    <property type="entry name" value="Ribosome-recycling factor"/>
    <property type="match status" value="1"/>
</dbReference>
<dbReference type="HAMAP" id="MF_00040">
    <property type="entry name" value="RRF"/>
    <property type="match status" value="1"/>
</dbReference>
<dbReference type="InterPro" id="IPR002661">
    <property type="entry name" value="Ribosome_recyc_fac"/>
</dbReference>
<dbReference type="InterPro" id="IPR023584">
    <property type="entry name" value="Ribosome_recyc_fac_dom"/>
</dbReference>
<dbReference type="InterPro" id="IPR036191">
    <property type="entry name" value="RRF_sf"/>
</dbReference>
<dbReference type="NCBIfam" id="TIGR00496">
    <property type="entry name" value="frr"/>
    <property type="match status" value="1"/>
</dbReference>
<dbReference type="PANTHER" id="PTHR20982:SF3">
    <property type="entry name" value="MITOCHONDRIAL RIBOSOME RECYCLING FACTOR PSEUDO 1"/>
    <property type="match status" value="1"/>
</dbReference>
<dbReference type="PANTHER" id="PTHR20982">
    <property type="entry name" value="RIBOSOME RECYCLING FACTOR"/>
    <property type="match status" value="1"/>
</dbReference>
<dbReference type="Pfam" id="PF01765">
    <property type="entry name" value="RRF"/>
    <property type="match status" value="1"/>
</dbReference>
<dbReference type="SUPFAM" id="SSF55194">
    <property type="entry name" value="Ribosome recycling factor, RRF"/>
    <property type="match status" value="1"/>
</dbReference>